<gene>
    <name type="primary">M</name>
</gene>
<organismHost>
    <name type="scientific">Homo sapiens</name>
    <name type="common">Human</name>
    <dbReference type="NCBI Taxonomy" id="9606"/>
</organismHost>
<organism>
    <name type="scientific">Mumps virus genotype B (strain Miyahara vaccine)</name>
    <name type="common">MuV</name>
    <dbReference type="NCBI Taxonomy" id="11171"/>
    <lineage>
        <taxon>Viruses</taxon>
        <taxon>Riboviria</taxon>
        <taxon>Orthornavirae</taxon>
        <taxon>Negarnaviricota</taxon>
        <taxon>Haploviricotina</taxon>
        <taxon>Monjiviricetes</taxon>
        <taxon>Mononegavirales</taxon>
        <taxon>Paramyxoviridae</taxon>
        <taxon>Rubulavirinae</taxon>
        <taxon>Orthorubulavirus</taxon>
        <taxon>Orthorubulavirus parotitidis</taxon>
        <taxon>Mumps orthorubulavirus</taxon>
    </lineage>
</organism>
<accession>Q9JG20</accession>
<proteinExistence type="inferred from homology"/>
<sequence>MAGSQIKIPLPKPPDSDSQRLNAFPVIMAQEGKGRLLRQIRLRKILSGDPSDQQITFVNTYGFIRATPETSEFISESSQQKVTPVVTACMLSFGAGPVLEDPQHMLKALDQTDIRVRKTASDKEQILFEINRIPNLFRHHQISADHLIQASSDKYVKSPAKLIAGVNYIYCVTFLSVTVCSASLKFRVARPLLAARSRLVRAVQMEVLLRVTCKKDSQMAKSMLSDPDGEGCIASVWFHLCNLCKGRNKLRSYDENYFASKCRKMNLTVSIGDMWGPTILVHAGGHIPTTAKPFFNSRGWVCHPIHQSSPSLAKTLWSSGCEIKAASAILQGSDYASLAKTDDIIYSKIKVDKDAANYKGVSWSPFRKSASMSNL</sequence>
<dbReference type="EMBL" id="AB040874">
    <property type="protein sequence ID" value="BAA94387.1"/>
    <property type="molecule type" value="Genomic_RNA"/>
</dbReference>
<dbReference type="SMR" id="Q9JG20"/>
<dbReference type="KEGG" id="vg:1489764"/>
<dbReference type="Proteomes" id="UP000002331">
    <property type="component" value="Segment"/>
</dbReference>
<dbReference type="GO" id="GO:0019031">
    <property type="term" value="C:viral envelope"/>
    <property type="evidence" value="ECO:0007669"/>
    <property type="project" value="UniProtKB-KW"/>
</dbReference>
<dbReference type="GO" id="GO:0039660">
    <property type="term" value="F:structural constituent of virion"/>
    <property type="evidence" value="ECO:0007669"/>
    <property type="project" value="UniProtKB-KW"/>
</dbReference>
<dbReference type="GO" id="GO:0019068">
    <property type="term" value="P:virion assembly"/>
    <property type="evidence" value="ECO:0007669"/>
    <property type="project" value="InterPro"/>
</dbReference>
<dbReference type="Gene3D" id="2.70.20.60">
    <property type="entry name" value="Viral matrix protein, C-terminal domain"/>
    <property type="match status" value="1"/>
</dbReference>
<dbReference type="Gene3D" id="2.70.20.50">
    <property type="entry name" value="Viral matrix protein, N-terminal domain"/>
    <property type="match status" value="1"/>
</dbReference>
<dbReference type="InterPro" id="IPR042539">
    <property type="entry name" value="Matrix_C"/>
</dbReference>
<dbReference type="InterPro" id="IPR042540">
    <property type="entry name" value="Matrix_N"/>
</dbReference>
<dbReference type="InterPro" id="IPR055413">
    <property type="entry name" value="Matrix_Paramyxo_C"/>
</dbReference>
<dbReference type="InterPro" id="IPR000982">
    <property type="entry name" value="Matrix_Paramyxo_N"/>
</dbReference>
<dbReference type="Pfam" id="PF23765">
    <property type="entry name" value="Matrix_Paramyxo_C"/>
    <property type="match status" value="1"/>
</dbReference>
<dbReference type="Pfam" id="PF00661">
    <property type="entry name" value="Matrix_Paramyxo_N"/>
    <property type="match status" value="1"/>
</dbReference>
<keyword id="KW-1185">Reference proteome</keyword>
<keyword id="KW-0261">Viral envelope protein</keyword>
<keyword id="KW-0468">Viral matrix protein</keyword>
<keyword id="KW-0946">Virion</keyword>
<protein>
    <recommendedName>
        <fullName>Matrix protein</fullName>
    </recommendedName>
</protein>
<evidence type="ECO:0000250" key="1">
    <source>
        <dbReference type="UniProtKB" id="Q9J4L4"/>
    </source>
</evidence>
<evidence type="ECO:0000250" key="2">
    <source>
        <dbReference type="UniProtKB" id="Q9W850"/>
    </source>
</evidence>
<evidence type="ECO:0000305" key="3"/>
<reference key="1">
    <citation type="journal article" date="1992" name="Virology">
        <title>Molecular cloning and sequence analysis of the mumps virus gene encoding the L protein and the trailer sequence.</title>
        <authorList>
            <person name="Okazaki K."/>
            <person name="Tanabayashi K."/>
            <person name="Takeuchi K."/>
            <person name="Hishiyama M."/>
            <person name="Okazaki K."/>
            <person name="Yamada A."/>
        </authorList>
    </citation>
    <scope>NUCLEOTIDE SEQUENCE [GENOMIC RNA]</scope>
</reference>
<comment type="function">
    <text evidence="2">The M protein has a crucial role in virus assembly and interacts with the RNP complex as well as with the viral membrane.</text>
</comment>
<comment type="subcellular location">
    <subcellularLocation>
        <location evidence="1">Virion</location>
    </subcellularLocation>
</comment>
<comment type="similarity">
    <text evidence="3">Belongs to the morbillivirus/respirovirus/rubulavirus M protein family.</text>
</comment>
<name>MATRX_MUMPM</name>
<feature type="chain" id="PRO_0000390307" description="Matrix protein">
    <location>
        <begin position="1"/>
        <end position="375"/>
    </location>
</feature>